<protein>
    <recommendedName>
        <fullName evidence="1">Glycerol-3-phosphate acyltransferase</fullName>
    </recommendedName>
    <alternativeName>
        <fullName evidence="1">Acyl-PO4 G3P acyltransferase</fullName>
    </alternativeName>
    <alternativeName>
        <fullName evidence="1">Acyl-phosphate--glycerol-3-phosphate acyltransferase</fullName>
    </alternativeName>
    <alternativeName>
        <fullName evidence="1">G3P acyltransferase</fullName>
        <shortName evidence="1">GPAT</shortName>
        <ecNumber evidence="1">2.3.1.275</ecNumber>
    </alternativeName>
    <alternativeName>
        <fullName evidence="1">Lysophosphatidic acid synthase</fullName>
        <shortName evidence="1">LPA synthase</shortName>
    </alternativeName>
</protein>
<dbReference type="EC" id="2.3.1.275" evidence="1"/>
<dbReference type="EMBL" id="CP000108">
    <property type="protein sequence ID" value="ABB29273.1"/>
    <property type="molecule type" value="Genomic_DNA"/>
</dbReference>
<dbReference type="SMR" id="Q3AP02"/>
<dbReference type="STRING" id="340177.Cag_2025"/>
<dbReference type="KEGG" id="cch:Cag_2025"/>
<dbReference type="eggNOG" id="COG0344">
    <property type="taxonomic scope" value="Bacteria"/>
</dbReference>
<dbReference type="HOGENOM" id="CLU_081254_3_0_10"/>
<dbReference type="OrthoDB" id="9777124at2"/>
<dbReference type="UniPathway" id="UPA00085"/>
<dbReference type="GO" id="GO:0005886">
    <property type="term" value="C:plasma membrane"/>
    <property type="evidence" value="ECO:0007669"/>
    <property type="project" value="UniProtKB-SubCell"/>
</dbReference>
<dbReference type="GO" id="GO:0043772">
    <property type="term" value="F:acyl-phosphate glycerol-3-phosphate acyltransferase activity"/>
    <property type="evidence" value="ECO:0007669"/>
    <property type="project" value="UniProtKB-UniRule"/>
</dbReference>
<dbReference type="GO" id="GO:0008654">
    <property type="term" value="P:phospholipid biosynthetic process"/>
    <property type="evidence" value="ECO:0007669"/>
    <property type="project" value="UniProtKB-UniRule"/>
</dbReference>
<dbReference type="HAMAP" id="MF_01043">
    <property type="entry name" value="PlsY"/>
    <property type="match status" value="1"/>
</dbReference>
<dbReference type="InterPro" id="IPR003811">
    <property type="entry name" value="G3P_acylTferase_PlsY"/>
</dbReference>
<dbReference type="NCBIfam" id="TIGR00023">
    <property type="entry name" value="glycerol-3-phosphate 1-O-acyltransferase PlsY"/>
    <property type="match status" value="1"/>
</dbReference>
<dbReference type="PANTHER" id="PTHR30309:SF0">
    <property type="entry name" value="GLYCEROL-3-PHOSPHATE ACYLTRANSFERASE-RELATED"/>
    <property type="match status" value="1"/>
</dbReference>
<dbReference type="PANTHER" id="PTHR30309">
    <property type="entry name" value="INNER MEMBRANE PROTEIN YGIH"/>
    <property type="match status" value="1"/>
</dbReference>
<dbReference type="Pfam" id="PF02660">
    <property type="entry name" value="G3P_acyltransf"/>
    <property type="match status" value="1"/>
</dbReference>
<dbReference type="SMART" id="SM01207">
    <property type="entry name" value="G3P_acyltransf"/>
    <property type="match status" value="1"/>
</dbReference>
<sequence>MLTLLAILVVSYIVGSIPTSLIAGKMLKSIDIRDFGSGNAGGTNAFRVLGWKTGLTVTLIDIIKGVVAAVSVVAFFRHHPIDVFPDINEVALRLLAGMSAVIGHVFTVFAGFRGGKGVSTAAGMLIGIAPVSMLMVIGVFLLTVYISRHVSVASILAAIAFPLIIAIRKYLFELGAGLDYYIKLFNAKFFFHDSLDYHLIIFGLIVAIAIIYTHRANIKRLLAGTENRISFGKH</sequence>
<reference key="1">
    <citation type="submission" date="2005-08" db="EMBL/GenBank/DDBJ databases">
        <title>Complete sequence of Chlorobium chlorochromatii CaD3.</title>
        <authorList>
            <consortium name="US DOE Joint Genome Institute"/>
            <person name="Copeland A."/>
            <person name="Lucas S."/>
            <person name="Lapidus A."/>
            <person name="Barry K."/>
            <person name="Detter J.C."/>
            <person name="Glavina T."/>
            <person name="Hammon N."/>
            <person name="Israni S."/>
            <person name="Pitluck S."/>
            <person name="Bryant D."/>
            <person name="Schmutz J."/>
            <person name="Larimer F."/>
            <person name="Land M."/>
            <person name="Kyrpides N."/>
            <person name="Ivanova N."/>
            <person name="Richardson P."/>
        </authorList>
    </citation>
    <scope>NUCLEOTIDE SEQUENCE [LARGE SCALE GENOMIC DNA]</scope>
    <source>
        <strain>CaD3</strain>
    </source>
</reference>
<organism>
    <name type="scientific">Chlorobium chlorochromatii (strain CaD3)</name>
    <dbReference type="NCBI Taxonomy" id="340177"/>
    <lineage>
        <taxon>Bacteria</taxon>
        <taxon>Pseudomonadati</taxon>
        <taxon>Chlorobiota</taxon>
        <taxon>Chlorobiia</taxon>
        <taxon>Chlorobiales</taxon>
        <taxon>Chlorobiaceae</taxon>
        <taxon>Chlorobium/Pelodictyon group</taxon>
        <taxon>Chlorobium</taxon>
    </lineage>
</organism>
<accession>Q3AP02</accession>
<gene>
    <name evidence="1" type="primary">plsY</name>
    <name type="ordered locus">Cag_2025</name>
</gene>
<proteinExistence type="inferred from homology"/>
<keyword id="KW-0997">Cell inner membrane</keyword>
<keyword id="KW-1003">Cell membrane</keyword>
<keyword id="KW-0444">Lipid biosynthesis</keyword>
<keyword id="KW-0443">Lipid metabolism</keyword>
<keyword id="KW-0472">Membrane</keyword>
<keyword id="KW-0594">Phospholipid biosynthesis</keyword>
<keyword id="KW-1208">Phospholipid metabolism</keyword>
<keyword id="KW-0808">Transferase</keyword>
<keyword id="KW-0812">Transmembrane</keyword>
<keyword id="KW-1133">Transmembrane helix</keyword>
<evidence type="ECO:0000255" key="1">
    <source>
        <dbReference type="HAMAP-Rule" id="MF_01043"/>
    </source>
</evidence>
<name>PLSY_CHLCH</name>
<feature type="chain" id="PRO_0000250294" description="Glycerol-3-phosphate acyltransferase">
    <location>
        <begin position="1"/>
        <end position="234"/>
    </location>
</feature>
<feature type="transmembrane region" description="Helical" evidence="1">
    <location>
        <begin position="4"/>
        <end position="24"/>
    </location>
</feature>
<feature type="transmembrane region" description="Helical" evidence="1">
    <location>
        <begin position="56"/>
        <end position="76"/>
    </location>
</feature>
<feature type="transmembrane region" description="Helical" evidence="1">
    <location>
        <begin position="90"/>
        <end position="110"/>
    </location>
</feature>
<feature type="transmembrane region" description="Helical" evidence="1">
    <location>
        <begin position="122"/>
        <end position="142"/>
    </location>
</feature>
<feature type="transmembrane region" description="Helical" evidence="1">
    <location>
        <begin position="152"/>
        <end position="172"/>
    </location>
</feature>
<feature type="transmembrane region" description="Helical" evidence="1">
    <location>
        <begin position="191"/>
        <end position="211"/>
    </location>
</feature>
<comment type="function">
    <text evidence="1">Catalyzes the transfer of an acyl group from acyl-phosphate (acyl-PO(4)) to glycerol-3-phosphate (G3P) to form lysophosphatidic acid (LPA). This enzyme utilizes acyl-phosphate as fatty acyl donor, but not acyl-CoA or acyl-ACP.</text>
</comment>
<comment type="catalytic activity">
    <reaction evidence="1">
        <text>an acyl phosphate + sn-glycerol 3-phosphate = a 1-acyl-sn-glycero-3-phosphate + phosphate</text>
        <dbReference type="Rhea" id="RHEA:34075"/>
        <dbReference type="ChEBI" id="CHEBI:43474"/>
        <dbReference type="ChEBI" id="CHEBI:57597"/>
        <dbReference type="ChEBI" id="CHEBI:57970"/>
        <dbReference type="ChEBI" id="CHEBI:59918"/>
        <dbReference type="EC" id="2.3.1.275"/>
    </reaction>
</comment>
<comment type="pathway">
    <text evidence="1">Lipid metabolism; phospholipid metabolism.</text>
</comment>
<comment type="subunit">
    <text evidence="1">Probably interacts with PlsX.</text>
</comment>
<comment type="subcellular location">
    <subcellularLocation>
        <location evidence="1">Cell inner membrane</location>
        <topology evidence="1">Multi-pass membrane protein</topology>
    </subcellularLocation>
</comment>
<comment type="similarity">
    <text evidence="1">Belongs to the PlsY family.</text>
</comment>